<dbReference type="EC" id="3.1.3.5" evidence="1"/>
<dbReference type="EMBL" id="CP000812">
    <property type="protein sequence ID" value="ABV33257.1"/>
    <property type="molecule type" value="Genomic_DNA"/>
</dbReference>
<dbReference type="RefSeq" id="WP_012002738.1">
    <property type="nucleotide sequence ID" value="NZ_BSDV01000001.1"/>
</dbReference>
<dbReference type="SMR" id="A8F523"/>
<dbReference type="STRING" id="416591.Tlet_0691"/>
<dbReference type="KEGG" id="tle:Tlet_0691"/>
<dbReference type="eggNOG" id="COG0496">
    <property type="taxonomic scope" value="Bacteria"/>
</dbReference>
<dbReference type="HOGENOM" id="CLU_045192_1_3_0"/>
<dbReference type="OrthoDB" id="9780815at2"/>
<dbReference type="Proteomes" id="UP000002016">
    <property type="component" value="Chromosome"/>
</dbReference>
<dbReference type="GO" id="GO:0005737">
    <property type="term" value="C:cytoplasm"/>
    <property type="evidence" value="ECO:0007669"/>
    <property type="project" value="UniProtKB-SubCell"/>
</dbReference>
<dbReference type="GO" id="GO:0008254">
    <property type="term" value="F:3'-nucleotidase activity"/>
    <property type="evidence" value="ECO:0007669"/>
    <property type="project" value="TreeGrafter"/>
</dbReference>
<dbReference type="GO" id="GO:0008253">
    <property type="term" value="F:5'-nucleotidase activity"/>
    <property type="evidence" value="ECO:0007669"/>
    <property type="project" value="UniProtKB-UniRule"/>
</dbReference>
<dbReference type="GO" id="GO:0004309">
    <property type="term" value="F:exopolyphosphatase activity"/>
    <property type="evidence" value="ECO:0007669"/>
    <property type="project" value="TreeGrafter"/>
</dbReference>
<dbReference type="GO" id="GO:0046872">
    <property type="term" value="F:metal ion binding"/>
    <property type="evidence" value="ECO:0007669"/>
    <property type="project" value="UniProtKB-UniRule"/>
</dbReference>
<dbReference type="GO" id="GO:0000166">
    <property type="term" value="F:nucleotide binding"/>
    <property type="evidence" value="ECO:0007669"/>
    <property type="project" value="UniProtKB-KW"/>
</dbReference>
<dbReference type="FunFam" id="3.40.1210.10:FF:000001">
    <property type="entry name" value="5'/3'-nucleotidase SurE"/>
    <property type="match status" value="1"/>
</dbReference>
<dbReference type="Gene3D" id="3.40.1210.10">
    <property type="entry name" value="Survival protein SurE-like phosphatase/nucleotidase"/>
    <property type="match status" value="1"/>
</dbReference>
<dbReference type="HAMAP" id="MF_00060">
    <property type="entry name" value="SurE"/>
    <property type="match status" value="1"/>
</dbReference>
<dbReference type="InterPro" id="IPR030048">
    <property type="entry name" value="SurE"/>
</dbReference>
<dbReference type="InterPro" id="IPR002828">
    <property type="entry name" value="SurE-like_Pase/nucleotidase"/>
</dbReference>
<dbReference type="InterPro" id="IPR036523">
    <property type="entry name" value="SurE-like_sf"/>
</dbReference>
<dbReference type="NCBIfam" id="NF001490">
    <property type="entry name" value="PRK00346.1-4"/>
    <property type="match status" value="1"/>
</dbReference>
<dbReference type="NCBIfam" id="NF010545">
    <property type="entry name" value="PRK13935.1"/>
    <property type="match status" value="1"/>
</dbReference>
<dbReference type="NCBIfam" id="TIGR00087">
    <property type="entry name" value="surE"/>
    <property type="match status" value="1"/>
</dbReference>
<dbReference type="PANTHER" id="PTHR30457">
    <property type="entry name" value="5'-NUCLEOTIDASE SURE"/>
    <property type="match status" value="1"/>
</dbReference>
<dbReference type="PANTHER" id="PTHR30457:SF12">
    <property type="entry name" value="5'_3'-NUCLEOTIDASE SURE"/>
    <property type="match status" value="1"/>
</dbReference>
<dbReference type="Pfam" id="PF01975">
    <property type="entry name" value="SurE"/>
    <property type="match status" value="1"/>
</dbReference>
<dbReference type="SUPFAM" id="SSF64167">
    <property type="entry name" value="SurE-like"/>
    <property type="match status" value="1"/>
</dbReference>
<gene>
    <name evidence="1" type="primary">surE</name>
    <name type="ordered locus">Tlet_0691</name>
</gene>
<reference key="1">
    <citation type="submission" date="2007-08" db="EMBL/GenBank/DDBJ databases">
        <title>Complete sequence of Thermotoga lettingae TMO.</title>
        <authorList>
            <consortium name="US DOE Joint Genome Institute"/>
            <person name="Copeland A."/>
            <person name="Lucas S."/>
            <person name="Lapidus A."/>
            <person name="Barry K."/>
            <person name="Glavina del Rio T."/>
            <person name="Dalin E."/>
            <person name="Tice H."/>
            <person name="Pitluck S."/>
            <person name="Foster B."/>
            <person name="Bruce D."/>
            <person name="Schmutz J."/>
            <person name="Larimer F."/>
            <person name="Land M."/>
            <person name="Hauser L."/>
            <person name="Kyrpides N."/>
            <person name="Mikhailova N."/>
            <person name="Nelson K."/>
            <person name="Gogarten J.P."/>
            <person name="Noll K."/>
            <person name="Richardson P."/>
        </authorList>
    </citation>
    <scope>NUCLEOTIDE SEQUENCE [LARGE SCALE GENOMIC DNA]</scope>
    <source>
        <strain>ATCC BAA-301 / DSM 14385 / NBRC 107922 / TMO</strain>
    </source>
</reference>
<comment type="function">
    <text evidence="1">Nucleotidase that shows phosphatase activity on nucleoside 5'-monophosphates.</text>
</comment>
<comment type="catalytic activity">
    <reaction evidence="1">
        <text>a ribonucleoside 5'-phosphate + H2O = a ribonucleoside + phosphate</text>
        <dbReference type="Rhea" id="RHEA:12484"/>
        <dbReference type="ChEBI" id="CHEBI:15377"/>
        <dbReference type="ChEBI" id="CHEBI:18254"/>
        <dbReference type="ChEBI" id="CHEBI:43474"/>
        <dbReference type="ChEBI" id="CHEBI:58043"/>
        <dbReference type="EC" id="3.1.3.5"/>
    </reaction>
</comment>
<comment type="cofactor">
    <cofactor evidence="1">
        <name>a divalent metal cation</name>
        <dbReference type="ChEBI" id="CHEBI:60240"/>
    </cofactor>
    <text evidence="1">Binds 1 divalent metal cation per subunit.</text>
</comment>
<comment type="subcellular location">
    <subcellularLocation>
        <location evidence="1">Cytoplasm</location>
    </subcellularLocation>
</comment>
<comment type="similarity">
    <text evidence="1">Belongs to the SurE nucleotidase family.</text>
</comment>
<keyword id="KW-0963">Cytoplasm</keyword>
<keyword id="KW-0378">Hydrolase</keyword>
<keyword id="KW-0479">Metal-binding</keyword>
<keyword id="KW-0547">Nucleotide-binding</keyword>
<keyword id="KW-1185">Reference proteome</keyword>
<sequence>MKILLTNDDGVTSQGLLILAKVLSQKHNILVVAPESEQSATGHAITVRMPIWVKRVRVLEEFPIYATTGTPADCVKIGMEVLANKQIDMVISGINIGHNLGTDVIYSGTVSGALEGALLGVPSIAVSAPARENFDYYSASFFISNFIENFDFSILEPFTALNINFPEGDIKGWKATRQSIRRYADRFEARTDPSGNTYYWMYGDVVEDDSATDCDYCVVSKGYVSVTPITVFMLNERALLQLKEVENGKENKTSWRSGS</sequence>
<feature type="chain" id="PRO_1000057414" description="5'-nucleotidase SurE">
    <location>
        <begin position="1"/>
        <end position="259"/>
    </location>
</feature>
<feature type="binding site" evidence="1">
    <location>
        <position position="8"/>
    </location>
    <ligand>
        <name>a divalent metal cation</name>
        <dbReference type="ChEBI" id="CHEBI:60240"/>
    </ligand>
</feature>
<feature type="binding site" evidence="1">
    <location>
        <position position="9"/>
    </location>
    <ligand>
        <name>a divalent metal cation</name>
        <dbReference type="ChEBI" id="CHEBI:60240"/>
    </ligand>
</feature>
<feature type="binding site" evidence="1">
    <location>
        <position position="39"/>
    </location>
    <ligand>
        <name>a divalent metal cation</name>
        <dbReference type="ChEBI" id="CHEBI:60240"/>
    </ligand>
</feature>
<feature type="binding site" evidence="1">
    <location>
        <position position="95"/>
    </location>
    <ligand>
        <name>a divalent metal cation</name>
        <dbReference type="ChEBI" id="CHEBI:60240"/>
    </ligand>
</feature>
<evidence type="ECO:0000255" key="1">
    <source>
        <dbReference type="HAMAP-Rule" id="MF_00060"/>
    </source>
</evidence>
<organism>
    <name type="scientific">Pseudothermotoga lettingae (strain ATCC BAA-301 / DSM 14385 / NBRC 107922 / TMO)</name>
    <name type="common">Thermotoga lettingae</name>
    <dbReference type="NCBI Taxonomy" id="416591"/>
    <lineage>
        <taxon>Bacteria</taxon>
        <taxon>Thermotogati</taxon>
        <taxon>Thermotogota</taxon>
        <taxon>Thermotogae</taxon>
        <taxon>Thermotogales</taxon>
        <taxon>Thermotogaceae</taxon>
        <taxon>Pseudothermotoga</taxon>
    </lineage>
</organism>
<accession>A8F523</accession>
<protein>
    <recommendedName>
        <fullName evidence="1">5'-nucleotidase SurE</fullName>
        <ecNumber evidence="1">3.1.3.5</ecNumber>
    </recommendedName>
    <alternativeName>
        <fullName evidence="1">Nucleoside 5'-monophosphate phosphohydrolase</fullName>
    </alternativeName>
</protein>
<proteinExistence type="inferred from homology"/>
<name>SURE_PSELT</name>